<reference key="1">
    <citation type="journal article" date="2009" name="PLoS Genet.">
        <title>Organised genome dynamics in the Escherichia coli species results in highly diverse adaptive paths.</title>
        <authorList>
            <person name="Touchon M."/>
            <person name="Hoede C."/>
            <person name="Tenaillon O."/>
            <person name="Barbe V."/>
            <person name="Baeriswyl S."/>
            <person name="Bidet P."/>
            <person name="Bingen E."/>
            <person name="Bonacorsi S."/>
            <person name="Bouchier C."/>
            <person name="Bouvet O."/>
            <person name="Calteau A."/>
            <person name="Chiapello H."/>
            <person name="Clermont O."/>
            <person name="Cruveiller S."/>
            <person name="Danchin A."/>
            <person name="Diard M."/>
            <person name="Dossat C."/>
            <person name="Karoui M.E."/>
            <person name="Frapy E."/>
            <person name="Garry L."/>
            <person name="Ghigo J.M."/>
            <person name="Gilles A.M."/>
            <person name="Johnson J."/>
            <person name="Le Bouguenec C."/>
            <person name="Lescat M."/>
            <person name="Mangenot S."/>
            <person name="Martinez-Jehanne V."/>
            <person name="Matic I."/>
            <person name="Nassif X."/>
            <person name="Oztas S."/>
            <person name="Petit M.A."/>
            <person name="Pichon C."/>
            <person name="Rouy Z."/>
            <person name="Ruf C.S."/>
            <person name="Schneider D."/>
            <person name="Tourret J."/>
            <person name="Vacherie B."/>
            <person name="Vallenet D."/>
            <person name="Medigue C."/>
            <person name="Rocha E.P.C."/>
            <person name="Denamur E."/>
        </authorList>
    </citation>
    <scope>NUCLEOTIDE SEQUENCE [LARGE SCALE GENOMIC DNA]</scope>
    <source>
        <strain>IAI1</strain>
    </source>
</reference>
<keyword id="KW-0255">Endonuclease</keyword>
<keyword id="KW-0269">Exonuclease</keyword>
<keyword id="KW-0378">Hydrolase</keyword>
<keyword id="KW-0479">Metal-binding</keyword>
<keyword id="KW-0540">Nuclease</keyword>
<keyword id="KW-0819">tRNA processing</keyword>
<keyword id="KW-0862">Zinc</keyword>
<evidence type="ECO:0000255" key="1">
    <source>
        <dbReference type="HAMAP-Rule" id="MF_01818"/>
    </source>
</evidence>
<comment type="function">
    <text evidence="1">Zinc phosphodiesterase, which has both exoribonuclease and endoribonuclease activities.</text>
</comment>
<comment type="cofactor">
    <cofactor evidence="1">
        <name>Zn(2+)</name>
        <dbReference type="ChEBI" id="CHEBI:29105"/>
    </cofactor>
    <text evidence="1">Binds 2 Zn(2+) ions.</text>
</comment>
<comment type="subunit">
    <text evidence="1">Homodimer.</text>
</comment>
<comment type="similarity">
    <text evidence="1">Belongs to the RNase Z family. RNase BN subfamily.</text>
</comment>
<gene>
    <name evidence="1" type="primary">rbn</name>
    <name type="synonym">rnz</name>
    <name type="ordered locus">ECIAI1_2346</name>
</gene>
<feature type="chain" id="PRO_1000187957" description="Ribonuclease BN">
    <location>
        <begin position="1"/>
        <end position="305"/>
    </location>
</feature>
<feature type="active site" description="Proton acceptor" evidence="1">
    <location>
        <position position="68"/>
    </location>
</feature>
<feature type="binding site" evidence="1">
    <location>
        <position position="64"/>
    </location>
    <ligand>
        <name>Zn(2+)</name>
        <dbReference type="ChEBI" id="CHEBI:29105"/>
        <label>1</label>
        <note>catalytic</note>
    </ligand>
</feature>
<feature type="binding site" evidence="1">
    <location>
        <position position="66"/>
    </location>
    <ligand>
        <name>Zn(2+)</name>
        <dbReference type="ChEBI" id="CHEBI:29105"/>
        <label>1</label>
        <note>catalytic</note>
    </ligand>
</feature>
<feature type="binding site" evidence="1">
    <location>
        <position position="68"/>
    </location>
    <ligand>
        <name>Zn(2+)</name>
        <dbReference type="ChEBI" id="CHEBI:29105"/>
        <label>2</label>
        <note>catalytic</note>
    </ligand>
</feature>
<feature type="binding site" evidence="1">
    <location>
        <position position="69"/>
    </location>
    <ligand>
        <name>Zn(2+)</name>
        <dbReference type="ChEBI" id="CHEBI:29105"/>
        <label>2</label>
        <note>catalytic</note>
    </ligand>
</feature>
<feature type="binding site" evidence="1">
    <location>
        <position position="141"/>
    </location>
    <ligand>
        <name>Zn(2+)</name>
        <dbReference type="ChEBI" id="CHEBI:29105"/>
        <label>1</label>
        <note>catalytic</note>
    </ligand>
</feature>
<feature type="binding site" evidence="1">
    <location>
        <position position="212"/>
    </location>
    <ligand>
        <name>Zn(2+)</name>
        <dbReference type="ChEBI" id="CHEBI:29105"/>
        <label>1</label>
        <note>catalytic</note>
    </ligand>
</feature>
<feature type="binding site" evidence="1">
    <location>
        <position position="212"/>
    </location>
    <ligand>
        <name>Zn(2+)</name>
        <dbReference type="ChEBI" id="CHEBI:29105"/>
        <label>2</label>
        <note>catalytic</note>
    </ligand>
</feature>
<feature type="binding site" evidence="1">
    <location>
        <position position="270"/>
    </location>
    <ligand>
        <name>Zn(2+)</name>
        <dbReference type="ChEBI" id="CHEBI:29105"/>
        <label>2</label>
        <note>catalytic</note>
    </ligand>
</feature>
<protein>
    <recommendedName>
        <fullName evidence="1">Ribonuclease BN</fullName>
        <shortName evidence="1">RNase BN</shortName>
        <ecNumber evidence="1">3.1.-.-</ecNumber>
    </recommendedName>
    <alternativeName>
        <fullName evidence="1">Ribonuclease Z homolog</fullName>
        <shortName evidence="1">RNase Z homolog</shortName>
    </alternativeName>
</protein>
<organism>
    <name type="scientific">Escherichia coli O8 (strain IAI1)</name>
    <dbReference type="NCBI Taxonomy" id="585034"/>
    <lineage>
        <taxon>Bacteria</taxon>
        <taxon>Pseudomonadati</taxon>
        <taxon>Pseudomonadota</taxon>
        <taxon>Gammaproteobacteria</taxon>
        <taxon>Enterobacterales</taxon>
        <taxon>Enterobacteriaceae</taxon>
        <taxon>Escherichia</taxon>
    </lineage>
</organism>
<accession>B7M5V1</accession>
<proteinExistence type="inferred from homology"/>
<name>RBN_ECO8A</name>
<dbReference type="EC" id="3.1.-.-" evidence="1"/>
<dbReference type="EMBL" id="CU928160">
    <property type="protein sequence ID" value="CAQ99188.1"/>
    <property type="molecule type" value="Genomic_DNA"/>
</dbReference>
<dbReference type="RefSeq" id="WP_001326256.1">
    <property type="nucleotide sequence ID" value="NC_011741.1"/>
</dbReference>
<dbReference type="SMR" id="B7M5V1"/>
<dbReference type="GeneID" id="75205681"/>
<dbReference type="KEGG" id="ecr:ECIAI1_2346"/>
<dbReference type="HOGENOM" id="CLU_031317_2_0_6"/>
<dbReference type="GO" id="GO:0042781">
    <property type="term" value="F:3'-tRNA processing endoribonuclease activity"/>
    <property type="evidence" value="ECO:0007669"/>
    <property type="project" value="TreeGrafter"/>
</dbReference>
<dbReference type="GO" id="GO:0004527">
    <property type="term" value="F:exonuclease activity"/>
    <property type="evidence" value="ECO:0007669"/>
    <property type="project" value="UniProtKB-UniRule"/>
</dbReference>
<dbReference type="GO" id="GO:0008270">
    <property type="term" value="F:zinc ion binding"/>
    <property type="evidence" value="ECO:0007669"/>
    <property type="project" value="UniProtKB-UniRule"/>
</dbReference>
<dbReference type="CDD" id="cd07717">
    <property type="entry name" value="RNaseZ_ZiPD-like_MBL-fold"/>
    <property type="match status" value="1"/>
</dbReference>
<dbReference type="FunFam" id="3.60.15.10:FF:000002">
    <property type="entry name" value="Ribonuclease Z"/>
    <property type="match status" value="1"/>
</dbReference>
<dbReference type="Gene3D" id="3.60.15.10">
    <property type="entry name" value="Ribonuclease Z/Hydroxyacylglutathione hydrolase-like"/>
    <property type="match status" value="1"/>
</dbReference>
<dbReference type="HAMAP" id="MF_01818">
    <property type="entry name" value="RNase_Z_BN"/>
    <property type="match status" value="1"/>
</dbReference>
<dbReference type="InterPro" id="IPR001279">
    <property type="entry name" value="Metallo-B-lactamas"/>
</dbReference>
<dbReference type="InterPro" id="IPR036866">
    <property type="entry name" value="RibonucZ/Hydroxyglut_hydro"/>
</dbReference>
<dbReference type="InterPro" id="IPR013469">
    <property type="entry name" value="Rnase_BN"/>
</dbReference>
<dbReference type="InterPro" id="IPR013471">
    <property type="entry name" value="RNase_Z/BN"/>
</dbReference>
<dbReference type="NCBIfam" id="NF000800">
    <property type="entry name" value="PRK00055.1-1"/>
    <property type="match status" value="1"/>
</dbReference>
<dbReference type="NCBIfam" id="NF000801">
    <property type="entry name" value="PRK00055.1-3"/>
    <property type="match status" value="1"/>
</dbReference>
<dbReference type="NCBIfam" id="TIGR02651">
    <property type="entry name" value="RNase_Z"/>
    <property type="match status" value="1"/>
</dbReference>
<dbReference type="NCBIfam" id="TIGR02649">
    <property type="entry name" value="true_RNase_BN"/>
    <property type="match status" value="1"/>
</dbReference>
<dbReference type="PANTHER" id="PTHR46018">
    <property type="entry name" value="ZINC PHOSPHODIESTERASE ELAC PROTEIN 1"/>
    <property type="match status" value="1"/>
</dbReference>
<dbReference type="PANTHER" id="PTHR46018:SF2">
    <property type="entry name" value="ZINC PHOSPHODIESTERASE ELAC PROTEIN 1"/>
    <property type="match status" value="1"/>
</dbReference>
<dbReference type="Pfam" id="PF12706">
    <property type="entry name" value="Lactamase_B_2"/>
    <property type="match status" value="1"/>
</dbReference>
<dbReference type="SMART" id="SM00849">
    <property type="entry name" value="Lactamase_B"/>
    <property type="match status" value="1"/>
</dbReference>
<dbReference type="SUPFAM" id="SSF56281">
    <property type="entry name" value="Metallo-hydrolase/oxidoreductase"/>
    <property type="match status" value="1"/>
</dbReference>
<sequence length="305" mass="32933">MELIFLGTSAGVPTRTRNVTAILLNLQHPTQSGLWLFDCGEGTQHQLLHTAFNPGKLDKIFISHLHGDHLFGLPGLLCSRSMSGIIQPLTIYGPQGIREFVETALRISGSWTDYPLEIVEIGAGEILDDGLRKVTAYPLEHPLECYGYRIEEHDKPGALNAQALKAAGVPPGPLFQELKAGKTITLEDGRQINGADYLAAPVPGKALAIFGDTGPCDAALDLAKGVDVMVHEATLDITMEAKANSRGHSSTRQAATLAREAGVGMLIITHVSSRYDDKGCQHLLRECRSIFPATELANDFTVFNV</sequence>